<feature type="chain" id="PRO_0000077110" description="Large ribosomal subunit protein uL3">
    <location>
        <begin position="1"/>
        <end position="207"/>
    </location>
</feature>
<feature type="region of interest" description="Disordered" evidence="2">
    <location>
        <begin position="113"/>
        <end position="148"/>
    </location>
</feature>
<gene>
    <name evidence="1" type="primary">rplC</name>
    <name type="ordered locus">LL2099</name>
    <name type="ORF">L0401</name>
</gene>
<sequence length="207" mass="21933">MSKGILGKKVGMTQIFTENGELIPVTVIEATPNTVLQVKSVETDGYEATQVGFDTLREVLTNKPAKGHAAKANTTPKRFVREFKGLEGAEVGAEITVDTFAAGDVVDVTGTSKGKGFQGPIKRHGQSRGPMAHGSRYHRRPGSMGPVAANKVPKGKKLAGRMGNKRVTVQNLVIAQVLPEKNVILVKGNVPGAKKSLIVVKSAIKAK</sequence>
<evidence type="ECO:0000255" key="1">
    <source>
        <dbReference type="HAMAP-Rule" id="MF_01325"/>
    </source>
</evidence>
<evidence type="ECO:0000256" key="2">
    <source>
        <dbReference type="SAM" id="MobiDB-lite"/>
    </source>
</evidence>
<evidence type="ECO:0000305" key="3"/>
<proteinExistence type="inferred from homology"/>
<accession>Q9CDW2</accession>
<reference key="1">
    <citation type="journal article" date="2001" name="Genome Res.">
        <title>The complete genome sequence of the lactic acid bacterium Lactococcus lactis ssp. lactis IL1403.</title>
        <authorList>
            <person name="Bolotin A."/>
            <person name="Wincker P."/>
            <person name="Mauger S."/>
            <person name="Jaillon O."/>
            <person name="Malarme K."/>
            <person name="Weissenbach J."/>
            <person name="Ehrlich S.D."/>
            <person name="Sorokin A."/>
        </authorList>
    </citation>
    <scope>NUCLEOTIDE SEQUENCE [LARGE SCALE GENOMIC DNA]</scope>
    <source>
        <strain>IL1403</strain>
    </source>
</reference>
<organism>
    <name type="scientific">Lactococcus lactis subsp. lactis (strain IL1403)</name>
    <name type="common">Streptococcus lactis</name>
    <dbReference type="NCBI Taxonomy" id="272623"/>
    <lineage>
        <taxon>Bacteria</taxon>
        <taxon>Bacillati</taxon>
        <taxon>Bacillota</taxon>
        <taxon>Bacilli</taxon>
        <taxon>Lactobacillales</taxon>
        <taxon>Streptococcaceae</taxon>
        <taxon>Lactococcus</taxon>
    </lineage>
</organism>
<keyword id="KW-1185">Reference proteome</keyword>
<keyword id="KW-0687">Ribonucleoprotein</keyword>
<keyword id="KW-0689">Ribosomal protein</keyword>
<keyword id="KW-0694">RNA-binding</keyword>
<keyword id="KW-0699">rRNA-binding</keyword>
<name>RL3_LACLA</name>
<protein>
    <recommendedName>
        <fullName evidence="1">Large ribosomal subunit protein uL3</fullName>
    </recommendedName>
    <alternativeName>
        <fullName evidence="3">50S ribosomal protein L3</fullName>
    </alternativeName>
</protein>
<comment type="function">
    <text evidence="1">One of the primary rRNA binding proteins, it binds directly near the 3'-end of the 23S rRNA, where it nucleates assembly of the 50S subunit.</text>
</comment>
<comment type="subunit">
    <text evidence="1">Part of the 50S ribosomal subunit. Forms a cluster with proteins L14 and L19.</text>
</comment>
<comment type="similarity">
    <text evidence="1">Belongs to the universal ribosomal protein uL3 family.</text>
</comment>
<dbReference type="EMBL" id="AE005176">
    <property type="protein sequence ID" value="AAK06197.1"/>
    <property type="molecule type" value="Genomic_DNA"/>
</dbReference>
<dbReference type="PIR" id="C86887">
    <property type="entry name" value="C86887"/>
</dbReference>
<dbReference type="RefSeq" id="NP_268256.1">
    <property type="nucleotide sequence ID" value="NC_002662.1"/>
</dbReference>
<dbReference type="RefSeq" id="WP_003129970.1">
    <property type="nucleotide sequence ID" value="NC_002662.1"/>
</dbReference>
<dbReference type="SMR" id="Q9CDW2"/>
<dbReference type="PaxDb" id="272623-L0401"/>
<dbReference type="EnsemblBacteria" id="AAK06197">
    <property type="protein sequence ID" value="AAK06197"/>
    <property type="gene ID" value="L0401"/>
</dbReference>
<dbReference type="GeneID" id="89634446"/>
<dbReference type="KEGG" id="lla:L0401"/>
<dbReference type="PATRIC" id="fig|272623.7.peg.2258"/>
<dbReference type="eggNOG" id="COG0087">
    <property type="taxonomic scope" value="Bacteria"/>
</dbReference>
<dbReference type="HOGENOM" id="CLU_044142_4_1_9"/>
<dbReference type="OrthoDB" id="9806135at2"/>
<dbReference type="Proteomes" id="UP000002196">
    <property type="component" value="Chromosome"/>
</dbReference>
<dbReference type="GO" id="GO:0022625">
    <property type="term" value="C:cytosolic large ribosomal subunit"/>
    <property type="evidence" value="ECO:0007669"/>
    <property type="project" value="TreeGrafter"/>
</dbReference>
<dbReference type="GO" id="GO:0019843">
    <property type="term" value="F:rRNA binding"/>
    <property type="evidence" value="ECO:0007669"/>
    <property type="project" value="UniProtKB-UniRule"/>
</dbReference>
<dbReference type="GO" id="GO:0003735">
    <property type="term" value="F:structural constituent of ribosome"/>
    <property type="evidence" value="ECO:0007669"/>
    <property type="project" value="InterPro"/>
</dbReference>
<dbReference type="GO" id="GO:0006412">
    <property type="term" value="P:translation"/>
    <property type="evidence" value="ECO:0007669"/>
    <property type="project" value="UniProtKB-UniRule"/>
</dbReference>
<dbReference type="FunFam" id="2.40.30.10:FF:000004">
    <property type="entry name" value="50S ribosomal protein L3"/>
    <property type="match status" value="1"/>
</dbReference>
<dbReference type="FunFam" id="3.30.160.810:FF:000002">
    <property type="entry name" value="50S ribosomal protein L3"/>
    <property type="match status" value="1"/>
</dbReference>
<dbReference type="Gene3D" id="3.30.160.810">
    <property type="match status" value="1"/>
</dbReference>
<dbReference type="Gene3D" id="2.40.30.10">
    <property type="entry name" value="Translation factors"/>
    <property type="match status" value="1"/>
</dbReference>
<dbReference type="HAMAP" id="MF_01325_B">
    <property type="entry name" value="Ribosomal_uL3_B"/>
    <property type="match status" value="1"/>
</dbReference>
<dbReference type="InterPro" id="IPR000597">
    <property type="entry name" value="Ribosomal_uL3"/>
</dbReference>
<dbReference type="InterPro" id="IPR019927">
    <property type="entry name" value="Ribosomal_uL3_bac/org-type"/>
</dbReference>
<dbReference type="InterPro" id="IPR019926">
    <property type="entry name" value="Ribosomal_uL3_CS"/>
</dbReference>
<dbReference type="InterPro" id="IPR009000">
    <property type="entry name" value="Transl_B-barrel_sf"/>
</dbReference>
<dbReference type="NCBIfam" id="TIGR03625">
    <property type="entry name" value="L3_bact"/>
    <property type="match status" value="1"/>
</dbReference>
<dbReference type="PANTHER" id="PTHR11229">
    <property type="entry name" value="50S RIBOSOMAL PROTEIN L3"/>
    <property type="match status" value="1"/>
</dbReference>
<dbReference type="PANTHER" id="PTHR11229:SF16">
    <property type="entry name" value="LARGE RIBOSOMAL SUBUNIT PROTEIN UL3C"/>
    <property type="match status" value="1"/>
</dbReference>
<dbReference type="Pfam" id="PF00297">
    <property type="entry name" value="Ribosomal_L3"/>
    <property type="match status" value="1"/>
</dbReference>
<dbReference type="SUPFAM" id="SSF50447">
    <property type="entry name" value="Translation proteins"/>
    <property type="match status" value="1"/>
</dbReference>
<dbReference type="PROSITE" id="PS00474">
    <property type="entry name" value="RIBOSOMAL_L3"/>
    <property type="match status" value="1"/>
</dbReference>